<keyword id="KW-0002">3D-structure</keyword>
<keyword id="KW-0067">ATP-binding</keyword>
<keyword id="KW-0963">Cytoplasm</keyword>
<keyword id="KW-0237">DNA synthesis</keyword>
<keyword id="KW-0418">Kinase</keyword>
<keyword id="KW-0479">Metal-binding</keyword>
<keyword id="KW-0547">Nucleotide-binding</keyword>
<keyword id="KW-1185">Reference proteome</keyword>
<keyword id="KW-0808">Transferase</keyword>
<keyword id="KW-0862">Zinc</keyword>
<sequence length="195" mass="22303">MYRPKDHGWVEVIVGPMYSGKSEELIRRIRRAKIAKQKIQVFKPEIDNRYSKEDVVSHMGEKEQAVAIKNSREILKYFEEDTEVIAIDEVQFFDDEIVEIVNKIAESGRRVICAGLDMDFRGKPFGPIPELMAIAEFVDKIQAICVVCGNPATRTQRLINGKPAFYDDPVVLIGAMESYEARCRKCHVVPQKKEV</sequence>
<proteinExistence type="evidence at protein level"/>
<accession>Q97F65</accession>
<comment type="catalytic activity">
    <reaction evidence="2">
        <text>thymidine + ATP = dTMP + ADP + H(+)</text>
        <dbReference type="Rhea" id="RHEA:19129"/>
        <dbReference type="ChEBI" id="CHEBI:15378"/>
        <dbReference type="ChEBI" id="CHEBI:17748"/>
        <dbReference type="ChEBI" id="CHEBI:30616"/>
        <dbReference type="ChEBI" id="CHEBI:63528"/>
        <dbReference type="ChEBI" id="CHEBI:456216"/>
        <dbReference type="EC" id="2.7.1.21"/>
    </reaction>
</comment>
<comment type="subcellular location">
    <subcellularLocation>
        <location evidence="2">Cytoplasm</location>
    </subcellularLocation>
</comment>
<comment type="similarity">
    <text evidence="2">Belongs to the thymidine kinase family.</text>
</comment>
<reference key="1">
    <citation type="journal article" date="2001" name="J. Bacteriol.">
        <title>Genome sequence and comparative analysis of the solvent-producing bacterium Clostridium acetobutylicum.</title>
        <authorList>
            <person name="Noelling J."/>
            <person name="Breton G."/>
            <person name="Omelchenko M.V."/>
            <person name="Makarova K.S."/>
            <person name="Zeng Q."/>
            <person name="Gibson R."/>
            <person name="Lee H.M."/>
            <person name="Dubois J."/>
            <person name="Qiu D."/>
            <person name="Hitti J."/>
            <person name="Wolf Y.I."/>
            <person name="Tatusov R.L."/>
            <person name="Sabathe F."/>
            <person name="Doucette-Stamm L.A."/>
            <person name="Soucaille P."/>
            <person name="Daly M.J."/>
            <person name="Bennett G.N."/>
            <person name="Koonin E.V."/>
            <person name="Smith D.R."/>
        </authorList>
    </citation>
    <scope>NUCLEOTIDE SEQUENCE [LARGE SCALE GENOMIC DNA]</scope>
    <source>
        <strain>ATCC 824 / DSM 792 / JCM 1419 / IAM 19013 / LMG 5710 / NBRC 13948 / NRRL B-527 / VKM B-1787 / 2291 / W</strain>
    </source>
</reference>
<reference key="2">
    <citation type="submission" date="2009-02" db="PDB data bank">
        <title>X-ray structure of clostridium acetobutylicum genomics target CAR26.</title>
        <authorList>
            <consortium name="Northeast structural genomics consortium (NESG)"/>
        </authorList>
    </citation>
    <scope>X-RAY CRYSTALLOGRAPHY (2.00 ANGSTROMS) OF 1-191 IN COMPLEX WITH ZINC IONS AND ADP</scope>
</reference>
<protein>
    <recommendedName>
        <fullName evidence="2">Thymidine kinase</fullName>
        <ecNumber evidence="2">2.7.1.21</ecNumber>
    </recommendedName>
</protein>
<gene>
    <name evidence="2" type="primary">tdk</name>
    <name type="ordered locus">CA_C2887</name>
</gene>
<organism>
    <name type="scientific">Clostridium acetobutylicum (strain ATCC 824 / DSM 792 / JCM 1419 / IAM 19013 / LMG 5710 / NBRC 13948 / NRRL B-527 / VKM B-1787 / 2291 / W)</name>
    <dbReference type="NCBI Taxonomy" id="272562"/>
    <lineage>
        <taxon>Bacteria</taxon>
        <taxon>Bacillati</taxon>
        <taxon>Bacillota</taxon>
        <taxon>Clostridia</taxon>
        <taxon>Eubacteriales</taxon>
        <taxon>Clostridiaceae</taxon>
        <taxon>Clostridium</taxon>
    </lineage>
</organism>
<evidence type="ECO:0000250" key="1"/>
<evidence type="ECO:0000255" key="2">
    <source>
        <dbReference type="HAMAP-Rule" id="MF_00124"/>
    </source>
</evidence>
<evidence type="ECO:0007829" key="3">
    <source>
        <dbReference type="PDB" id="1XX6"/>
    </source>
</evidence>
<feature type="chain" id="PRO_0000174967" description="Thymidine kinase">
    <location>
        <begin position="1"/>
        <end position="195"/>
    </location>
</feature>
<feature type="active site" description="Proton acceptor" evidence="2">
    <location>
        <position position="89"/>
    </location>
</feature>
<feature type="binding site">
    <location>
        <begin position="15"/>
        <end position="22"/>
    </location>
    <ligand>
        <name>ATP</name>
        <dbReference type="ChEBI" id="CHEBI:30616"/>
    </ligand>
</feature>
<feature type="binding site">
    <location>
        <position position="23"/>
    </location>
    <ligand>
        <name>ATP</name>
        <dbReference type="ChEBI" id="CHEBI:30616"/>
    </ligand>
</feature>
<feature type="binding site">
    <location>
        <begin position="57"/>
        <end position="58"/>
    </location>
    <ligand>
        <name>ATP</name>
        <dbReference type="ChEBI" id="CHEBI:30616"/>
    </ligand>
</feature>
<feature type="binding site" evidence="2">
    <location>
        <begin position="88"/>
        <end position="91"/>
    </location>
    <ligand>
        <name>ATP</name>
        <dbReference type="ChEBI" id="CHEBI:30616"/>
    </ligand>
</feature>
<feature type="binding site" evidence="1">
    <location>
        <position position="120"/>
    </location>
    <ligand>
        <name>substrate</name>
    </ligand>
</feature>
<feature type="binding site">
    <location>
        <position position="145"/>
    </location>
    <ligand>
        <name>Zn(2+)</name>
        <dbReference type="ChEBI" id="CHEBI:29105"/>
    </ligand>
</feature>
<feature type="binding site">
    <location>
        <position position="148"/>
    </location>
    <ligand>
        <name>Zn(2+)</name>
        <dbReference type="ChEBI" id="CHEBI:29105"/>
    </ligand>
</feature>
<feature type="binding site" evidence="1">
    <location>
        <position position="179"/>
    </location>
    <ligand>
        <name>substrate</name>
    </ligand>
</feature>
<feature type="binding site">
    <location>
        <position position="183"/>
    </location>
    <ligand>
        <name>Zn(2+)</name>
        <dbReference type="ChEBI" id="CHEBI:29105"/>
    </ligand>
</feature>
<feature type="binding site">
    <location>
        <position position="186"/>
    </location>
    <ligand>
        <name>Zn(2+)</name>
        <dbReference type="ChEBI" id="CHEBI:29105"/>
    </ligand>
</feature>
<feature type="strand" evidence="3">
    <location>
        <begin position="9"/>
        <end position="14"/>
    </location>
</feature>
<feature type="helix" evidence="3">
    <location>
        <begin position="21"/>
        <end position="34"/>
    </location>
</feature>
<feature type="strand" evidence="3">
    <location>
        <begin position="39"/>
        <end position="44"/>
    </location>
</feature>
<feature type="strand" evidence="3">
    <location>
        <begin position="54"/>
        <end position="56"/>
    </location>
</feature>
<feature type="strand" evidence="3">
    <location>
        <begin position="62"/>
        <end position="64"/>
    </location>
</feature>
<feature type="strand" evidence="3">
    <location>
        <begin position="66"/>
        <end position="71"/>
    </location>
</feature>
<feature type="helix" evidence="3">
    <location>
        <begin position="73"/>
        <end position="77"/>
    </location>
</feature>
<feature type="strand" evidence="3">
    <location>
        <begin position="83"/>
        <end position="87"/>
    </location>
</feature>
<feature type="helix" evidence="3">
    <location>
        <begin position="90"/>
        <end position="92"/>
    </location>
</feature>
<feature type="helix" evidence="3">
    <location>
        <begin position="97"/>
        <end position="106"/>
    </location>
</feature>
<feature type="strand" evidence="3">
    <location>
        <begin position="110"/>
        <end position="115"/>
    </location>
</feature>
<feature type="helix" evidence="3">
    <location>
        <begin position="128"/>
        <end position="134"/>
    </location>
</feature>
<feature type="strand" evidence="3">
    <location>
        <begin position="136"/>
        <end position="140"/>
    </location>
</feature>
<feature type="turn" evidence="3">
    <location>
        <begin position="146"/>
        <end position="148"/>
    </location>
</feature>
<feature type="strand" evidence="3">
    <location>
        <begin position="149"/>
        <end position="152"/>
    </location>
</feature>
<feature type="strand" evidence="3">
    <location>
        <begin position="154"/>
        <end position="159"/>
    </location>
</feature>
<feature type="strand" evidence="3">
    <location>
        <begin position="177"/>
        <end position="182"/>
    </location>
</feature>
<feature type="turn" evidence="3">
    <location>
        <begin position="184"/>
        <end position="186"/>
    </location>
</feature>
<name>KITH_CLOAB</name>
<dbReference type="EC" id="2.7.1.21" evidence="2"/>
<dbReference type="EMBL" id="AE001437">
    <property type="protein sequence ID" value="AAK80830.1"/>
    <property type="molecule type" value="Genomic_DNA"/>
</dbReference>
<dbReference type="PIR" id="C97255">
    <property type="entry name" value="C97255"/>
</dbReference>
<dbReference type="RefSeq" id="NP_349490.1">
    <property type="nucleotide sequence ID" value="NC_003030.1"/>
</dbReference>
<dbReference type="RefSeq" id="WP_010966171.1">
    <property type="nucleotide sequence ID" value="NC_003030.1"/>
</dbReference>
<dbReference type="PDB" id="1XX6">
    <property type="method" value="X-ray"/>
    <property type="resolution" value="2.00 A"/>
    <property type="chains" value="A/B=1-191"/>
</dbReference>
<dbReference type="PDBsum" id="1XX6"/>
<dbReference type="SMR" id="Q97F65"/>
<dbReference type="STRING" id="272562.CA_C2887"/>
<dbReference type="KEGG" id="cac:CA_C2887"/>
<dbReference type="PATRIC" id="fig|272562.8.peg.3071"/>
<dbReference type="eggNOG" id="COG1435">
    <property type="taxonomic scope" value="Bacteria"/>
</dbReference>
<dbReference type="HOGENOM" id="CLU_064400_3_0_9"/>
<dbReference type="OrthoDB" id="9781579at2"/>
<dbReference type="BRENDA" id="2.7.1.21">
    <property type="organism ID" value="1452"/>
</dbReference>
<dbReference type="EvolutionaryTrace" id="Q97F65"/>
<dbReference type="Proteomes" id="UP000000814">
    <property type="component" value="Chromosome"/>
</dbReference>
<dbReference type="GO" id="GO:0005829">
    <property type="term" value="C:cytosol"/>
    <property type="evidence" value="ECO:0007669"/>
    <property type="project" value="TreeGrafter"/>
</dbReference>
<dbReference type="GO" id="GO:0005524">
    <property type="term" value="F:ATP binding"/>
    <property type="evidence" value="ECO:0007669"/>
    <property type="project" value="UniProtKB-UniRule"/>
</dbReference>
<dbReference type="GO" id="GO:0004797">
    <property type="term" value="F:thymidine kinase activity"/>
    <property type="evidence" value="ECO:0007669"/>
    <property type="project" value="UniProtKB-UniRule"/>
</dbReference>
<dbReference type="GO" id="GO:0008270">
    <property type="term" value="F:zinc ion binding"/>
    <property type="evidence" value="ECO:0007669"/>
    <property type="project" value="UniProtKB-UniRule"/>
</dbReference>
<dbReference type="GO" id="GO:0071897">
    <property type="term" value="P:DNA biosynthetic process"/>
    <property type="evidence" value="ECO:0007669"/>
    <property type="project" value="UniProtKB-KW"/>
</dbReference>
<dbReference type="GO" id="GO:0046104">
    <property type="term" value="P:thymidine metabolic process"/>
    <property type="evidence" value="ECO:0007669"/>
    <property type="project" value="TreeGrafter"/>
</dbReference>
<dbReference type="FunFam" id="3.30.60.20:FF:000026">
    <property type="entry name" value="Thymidine kinase"/>
    <property type="match status" value="1"/>
</dbReference>
<dbReference type="FunFam" id="3.40.50.300:FF:000384">
    <property type="entry name" value="Thymidine kinase"/>
    <property type="match status" value="1"/>
</dbReference>
<dbReference type="Gene3D" id="3.30.60.20">
    <property type="match status" value="1"/>
</dbReference>
<dbReference type="Gene3D" id="3.40.50.300">
    <property type="entry name" value="P-loop containing nucleotide triphosphate hydrolases"/>
    <property type="match status" value="1"/>
</dbReference>
<dbReference type="HAMAP" id="MF_00124">
    <property type="entry name" value="Thymidine_kinase"/>
    <property type="match status" value="1"/>
</dbReference>
<dbReference type="InterPro" id="IPR027417">
    <property type="entry name" value="P-loop_NTPase"/>
</dbReference>
<dbReference type="InterPro" id="IPR001267">
    <property type="entry name" value="Thymidine_kinase"/>
</dbReference>
<dbReference type="InterPro" id="IPR020633">
    <property type="entry name" value="Thymidine_kinase_CS"/>
</dbReference>
<dbReference type="NCBIfam" id="NF003296">
    <property type="entry name" value="PRK04296.1-1"/>
    <property type="match status" value="1"/>
</dbReference>
<dbReference type="PANTHER" id="PTHR11441">
    <property type="entry name" value="THYMIDINE KINASE"/>
    <property type="match status" value="1"/>
</dbReference>
<dbReference type="PANTHER" id="PTHR11441:SF0">
    <property type="entry name" value="THYMIDINE KINASE, CYTOSOLIC"/>
    <property type="match status" value="1"/>
</dbReference>
<dbReference type="Pfam" id="PF00265">
    <property type="entry name" value="TK"/>
    <property type="match status" value="1"/>
</dbReference>
<dbReference type="PIRSF" id="PIRSF035805">
    <property type="entry name" value="TK_cell"/>
    <property type="match status" value="1"/>
</dbReference>
<dbReference type="SUPFAM" id="SSF57716">
    <property type="entry name" value="Glucocorticoid receptor-like (DNA-binding domain)"/>
    <property type="match status" value="1"/>
</dbReference>
<dbReference type="SUPFAM" id="SSF52540">
    <property type="entry name" value="P-loop containing nucleoside triphosphate hydrolases"/>
    <property type="match status" value="1"/>
</dbReference>
<dbReference type="PROSITE" id="PS00603">
    <property type="entry name" value="TK_CELLULAR_TYPE"/>
    <property type="match status" value="1"/>
</dbReference>